<feature type="initiator methionine" description="Removed" evidence="3">
    <location>
        <position position="1"/>
    </location>
</feature>
<feature type="chain" id="PRO_0000199246" description="Photosystem I-associated linker protein CpcL">
    <location>
        <begin position="2"/>
        <end position="237"/>
    </location>
</feature>
<feature type="transmembrane region" description="Helical" evidence="1">
    <location>
        <begin position="208"/>
        <end position="228"/>
    </location>
</feature>
<feature type="domain" description="PBS-linker" evidence="2">
    <location>
        <begin position="11"/>
        <end position="191"/>
    </location>
</feature>
<keyword id="KW-0042">Antenna complex</keyword>
<keyword id="KW-0903">Direct protein sequencing</keyword>
<keyword id="KW-0472">Membrane</keyword>
<keyword id="KW-0602">Photosynthesis</keyword>
<keyword id="KW-0605">Phycobilisome</keyword>
<keyword id="KW-1185">Reference proteome</keyword>
<keyword id="KW-0793">Thylakoid</keyword>
<keyword id="KW-0812">Transmembrane</keyword>
<keyword id="KW-1133">Transmembrane helix</keyword>
<protein>
    <recommendedName>
        <fullName evidence="5">Photosystem I-associated linker protein CpcL</fullName>
    </recommendedName>
    <alternativeName>
        <fullName>L-RC 27.2</fullName>
    </alternativeName>
    <alternativeName>
        <fullName evidence="4">Phycobilisome rod-core linker polypeptide CpcG3</fullName>
    </alternativeName>
</protein>
<evidence type="ECO:0000255" key="1"/>
<evidence type="ECO:0000255" key="2">
    <source>
        <dbReference type="PROSITE-ProRule" id="PRU00775"/>
    </source>
</evidence>
<evidence type="ECO:0000269" key="3">
    <source>
    </source>
</evidence>
<evidence type="ECO:0000303" key="4">
    <source>
    </source>
</evidence>
<evidence type="ECO:0000303" key="5">
    <source>
    </source>
</evidence>
<proteinExistence type="evidence at protein level"/>
<organism>
    <name type="scientific">Nostoc sp. (strain PCC 7120 / SAG 25.82 / UTEX 2576)</name>
    <dbReference type="NCBI Taxonomy" id="103690"/>
    <lineage>
        <taxon>Bacteria</taxon>
        <taxon>Bacillati</taxon>
        <taxon>Cyanobacteriota</taxon>
        <taxon>Cyanophyceae</taxon>
        <taxon>Nostocales</taxon>
        <taxon>Nostocaceae</taxon>
        <taxon>Nostoc</taxon>
    </lineage>
</organism>
<sequence length="237" mass="27206">MALPLLEYKPTTQNQRVQSFGTADVNEDTPYIYRLENANSPSEIEELIWAAYRQVFNEQEILKFNRQIGLETQLKNRSITVKDFIRGLAKSERFYQLVVTPNNNYRLVEMSLKRLLGRSPYNEEEKIAWSIQIASKGWGGFVDALIDSTEYEQAFGDNTVPYQRKRLTTDRPFSFTPRYGADYRDRAGIVRPGRMSNWNNSANQNYDGVAILGVLLAISAGMTFLFVLNWLGISSSF</sequence>
<gene>
    <name evidence="5" type="primary">cpcL</name>
    <name evidence="4" type="synonym">cpcG3</name>
    <name type="ordered locus">alr0536</name>
</gene>
<dbReference type="EMBL" id="M80435">
    <property type="protein sequence ID" value="AAA22038.1"/>
    <property type="molecule type" value="Genomic_DNA"/>
</dbReference>
<dbReference type="EMBL" id="BA000019">
    <property type="protein sequence ID" value="BAB72494.1"/>
    <property type="molecule type" value="Genomic_DNA"/>
</dbReference>
<dbReference type="PIR" id="AG1873">
    <property type="entry name" value="AG1873"/>
</dbReference>
<dbReference type="PIR" id="JS0594">
    <property type="entry name" value="JS0594"/>
</dbReference>
<dbReference type="RefSeq" id="WP_010994712.1">
    <property type="nucleotide sequence ID" value="NZ_RSCN01000059.1"/>
</dbReference>
<dbReference type="SMR" id="P29988"/>
<dbReference type="STRING" id="103690.gene:10492547"/>
<dbReference type="KEGG" id="ana:alr0536"/>
<dbReference type="eggNOG" id="COG0237">
    <property type="taxonomic scope" value="Bacteria"/>
</dbReference>
<dbReference type="OrthoDB" id="448032at2"/>
<dbReference type="Proteomes" id="UP000002483">
    <property type="component" value="Chromosome"/>
</dbReference>
<dbReference type="GO" id="GO:0030089">
    <property type="term" value="C:phycobilisome"/>
    <property type="evidence" value="ECO:0007669"/>
    <property type="project" value="UniProtKB-KW"/>
</dbReference>
<dbReference type="GO" id="GO:0031676">
    <property type="term" value="C:plasma membrane-derived thylakoid membrane"/>
    <property type="evidence" value="ECO:0007669"/>
    <property type="project" value="UniProtKB-SubCell"/>
</dbReference>
<dbReference type="GO" id="GO:0015979">
    <property type="term" value="P:photosynthesis"/>
    <property type="evidence" value="ECO:0007669"/>
    <property type="project" value="UniProtKB-KW"/>
</dbReference>
<dbReference type="Gene3D" id="1.10.3130.20">
    <property type="entry name" value="Phycobilisome linker domain"/>
    <property type="match status" value="1"/>
</dbReference>
<dbReference type="InterPro" id="IPR001297">
    <property type="entry name" value="PBS_linker_dom"/>
</dbReference>
<dbReference type="InterPro" id="IPR038255">
    <property type="entry name" value="PBS_linker_sf"/>
</dbReference>
<dbReference type="InterPro" id="IPR016470">
    <property type="entry name" value="Phycobilisome"/>
</dbReference>
<dbReference type="PANTHER" id="PTHR34011">
    <property type="entry name" value="PHYCOBILISOME 32.1 KDA LINKER POLYPEPTIDE, PHYCOCYANIN-ASSOCIATED, ROD 2-RELATED"/>
    <property type="match status" value="1"/>
</dbReference>
<dbReference type="Pfam" id="PF00427">
    <property type="entry name" value="PBS_linker_poly"/>
    <property type="match status" value="1"/>
</dbReference>
<dbReference type="PIRSF" id="PIRSF005898">
    <property type="entry name" value="Phycobilisome_CpeC/CpcI"/>
    <property type="match status" value="1"/>
</dbReference>
<dbReference type="PROSITE" id="PS51445">
    <property type="entry name" value="PBS_LINKER"/>
    <property type="match status" value="1"/>
</dbReference>
<comment type="function">
    <text evidence="3">Rod linker protein, associated with phycocyanin (PC). Linker polypeptides determine the state of aggregation and the location of the disk-shaped phycobiliprotein units within the phycobilisome (PBS) and modulate their spectroscopic properties in order to mediate a directed and optimal energy transfer. Forms a supercomplex with tetrameric photosystem I (PSI) and PC that allows efficient energy transfer from PC to PSI. This protein seems to be in the middle of the PC hexameric rod and may anchor the PC rods at the periphery of PSI tetramers. May be involved in the cyclic electron transport around PSI that provides ATP needed for N(2) fixation in heterocysts (PubMed:24550276).</text>
</comment>
<comment type="subunit">
    <text evidence="3">Part of a specialized phycobilisome (PBS), a structure that is usually composed of two distinct substructures: a core complex and a number of rods radiating from the core. This protein is part of a core-less PBS rod (called CpcL-PBS). In vegetative cells associated substoichiometrically with photosystem I and phycobiliproteins phycocyanin as well as phycoerythrocyanin in the thylakoid membrane, not found in conventional, hemidiscoidal phycobilisomes.</text>
</comment>
<comment type="subcellular location">
    <subcellularLocation>
        <location evidence="3">Cellular thylakoid membrane</location>
        <topology evidence="1">Single-pass membrane protein</topology>
    </subcellularLocation>
    <text evidence="3">Part of a core-less phycobilisome rod (CpcL-PBS). A portion of the protein is not associated with thylakoids in N(2)-fixing heterocysts.</text>
</comment>
<comment type="developmental stage">
    <text evidence="3">Expressed in both vegetative cells and in N(2)-fixing heterocysts; considerably more abundant in heterocysts (at protein level).</text>
</comment>
<comment type="similarity">
    <text evidence="2">Belongs to the phycobilisome linker protein family.</text>
</comment>
<reference key="1">
    <citation type="journal article" date="1991" name="Gene">
        <title>A small multigene family encodes the rod-core linker polypeptides of Anabaena sp. PCC7120 phycobilisomes.</title>
        <authorList>
            <person name="Bryant D.A."/>
            <person name="Stirewalt V.L."/>
            <person name="Glauser M."/>
            <person name="Frank G."/>
            <person name="Sidler W."/>
            <person name="Zuber H."/>
        </authorList>
    </citation>
    <scope>NUCLEOTIDE SEQUENCE [GENOMIC DNA]</scope>
    <source>
        <strain>PCC 7120 / SAG 25.82 / UTEX 2576</strain>
    </source>
</reference>
<reference key="2">
    <citation type="journal article" date="2001" name="DNA Res.">
        <title>Complete genomic sequence of the filamentous nitrogen-fixing cyanobacterium Anabaena sp. strain PCC 7120.</title>
        <authorList>
            <person name="Kaneko T."/>
            <person name="Nakamura Y."/>
            <person name="Wolk C.P."/>
            <person name="Kuritz T."/>
            <person name="Sasamoto S."/>
            <person name="Watanabe A."/>
            <person name="Iriguchi M."/>
            <person name="Ishikawa A."/>
            <person name="Kawashima K."/>
            <person name="Kimura T."/>
            <person name="Kishida Y."/>
            <person name="Kohara M."/>
            <person name="Matsumoto M."/>
            <person name="Matsuno A."/>
            <person name="Muraki A."/>
            <person name="Nakazaki N."/>
            <person name="Shimpo S."/>
            <person name="Sugimoto M."/>
            <person name="Takazawa M."/>
            <person name="Yamada M."/>
            <person name="Yasuda M."/>
            <person name="Tabata S."/>
        </authorList>
    </citation>
    <scope>NUCLEOTIDE SEQUENCE [LARGE SCALE GENOMIC DNA]</scope>
    <source>
        <strain>PCC 7120 / SAG 25.82 / UTEX 2576</strain>
    </source>
</reference>
<reference key="3">
    <citation type="journal article" date="2014" name="Proc. Natl. Acad. Sci. U.S.A.">
        <title>Attachment of phycobilisomes in an antenna-photosystem I supercomplex of cyanobacteria.</title>
        <authorList>
            <person name="Watanabe M."/>
            <person name="Semchonok D.A."/>
            <person name="Webber-Birungi M.T."/>
            <person name="Ehira S."/>
            <person name="Kondo K."/>
            <person name="Narikawa R."/>
            <person name="Ohmori M."/>
            <person name="Boekema E.J."/>
            <person name="Ikeuchi M."/>
        </authorList>
    </citation>
    <scope>PROTEIN SEQUENCE OF 2-16</scope>
    <scope>FUNCTION</scope>
    <scope>SUBUNIT</scope>
    <scope>SUBCELLULAR LOCATION</scope>
    <scope>DEVELOPMENTAL STAGE</scope>
    <source>
        <strain>PCC 7120 / SAG 25.82 / UTEX 2576</strain>
    </source>
</reference>
<accession>P29988</accession>
<name>CPCL_NOSS1</name>